<proteinExistence type="inferred from homology"/>
<protein>
    <recommendedName>
        <fullName evidence="1">Urease accessory protein UreF</fullName>
    </recommendedName>
</protein>
<dbReference type="EMBL" id="U89957">
    <property type="protein sequence ID" value="AAC00063.1"/>
    <property type="molecule type" value="Genomic_DNA"/>
</dbReference>
<dbReference type="SMR" id="O54423"/>
<dbReference type="GO" id="GO:0005737">
    <property type="term" value="C:cytoplasm"/>
    <property type="evidence" value="ECO:0007669"/>
    <property type="project" value="UniProtKB-SubCell"/>
</dbReference>
<dbReference type="GO" id="GO:0016151">
    <property type="term" value="F:nickel cation binding"/>
    <property type="evidence" value="ECO:0007669"/>
    <property type="project" value="UniProtKB-UniRule"/>
</dbReference>
<dbReference type="Gene3D" id="1.10.4190.10">
    <property type="entry name" value="Urease accessory protein UreF"/>
    <property type="match status" value="1"/>
</dbReference>
<dbReference type="HAMAP" id="MF_01385">
    <property type="entry name" value="UreF"/>
    <property type="match status" value="1"/>
</dbReference>
<dbReference type="InterPro" id="IPR002639">
    <property type="entry name" value="UreF"/>
</dbReference>
<dbReference type="InterPro" id="IPR038277">
    <property type="entry name" value="UreF_sf"/>
</dbReference>
<dbReference type="PANTHER" id="PTHR33620">
    <property type="entry name" value="UREASE ACCESSORY PROTEIN F"/>
    <property type="match status" value="1"/>
</dbReference>
<dbReference type="PANTHER" id="PTHR33620:SF1">
    <property type="entry name" value="UREASE ACCESSORY PROTEIN F"/>
    <property type="match status" value="1"/>
</dbReference>
<dbReference type="Pfam" id="PF01730">
    <property type="entry name" value="UreF"/>
    <property type="match status" value="1"/>
</dbReference>
<dbReference type="PIRSF" id="PIRSF009467">
    <property type="entry name" value="Ureas_acces_UreF"/>
    <property type="match status" value="1"/>
</dbReference>
<organism>
    <name type="scientific">Actinobacillus pleuropneumoniae</name>
    <name type="common">Haemophilus pleuropneumoniae</name>
    <dbReference type="NCBI Taxonomy" id="715"/>
    <lineage>
        <taxon>Bacteria</taxon>
        <taxon>Pseudomonadati</taxon>
        <taxon>Pseudomonadota</taxon>
        <taxon>Gammaproteobacteria</taxon>
        <taxon>Pasteurellales</taxon>
        <taxon>Pasteurellaceae</taxon>
        <taxon>Actinobacillus</taxon>
    </lineage>
</organism>
<feature type="chain" id="PRO_0000067643" description="Urease accessory protein UreF">
    <location>
        <begin position="1"/>
        <end position="227"/>
    </location>
</feature>
<name>UREF_ACTPL</name>
<gene>
    <name evidence="1" type="primary">ureF</name>
</gene>
<accession>O54423</accession>
<evidence type="ECO:0000255" key="1">
    <source>
        <dbReference type="HAMAP-Rule" id="MF_01385"/>
    </source>
</evidence>
<reference key="1">
    <citation type="journal article" date="1997" name="Infect. Immun.">
        <title>Genetic and biochemical analyses of Actinobacillus pleuropneumoniae urease.</title>
        <authorList>
            <person name="Bosse J.T."/>
            <person name="Macinnes J.I."/>
        </authorList>
    </citation>
    <scope>NUCLEOTIDE SEQUENCE [GENOMIC DNA]</scope>
    <source>
        <strain>CM5 / Serotype 1</strain>
    </source>
</reference>
<keyword id="KW-0143">Chaperone</keyword>
<keyword id="KW-0963">Cytoplasm</keyword>
<keyword id="KW-0996">Nickel insertion</keyword>
<comment type="function">
    <text evidence="1">Required for maturation of urease via the functional incorporation of the urease nickel metallocenter.</text>
</comment>
<comment type="subunit">
    <text evidence="1">UreD, UreF and UreG form a complex that acts as a GTP-hydrolysis-dependent molecular chaperone, activating the urease apoprotein by helping to assemble the nickel containing metallocenter of UreC. The UreE protein probably delivers the nickel.</text>
</comment>
<comment type="subcellular location">
    <subcellularLocation>
        <location evidence="1">Cytoplasm</location>
    </subcellularLocation>
</comment>
<comment type="similarity">
    <text evidence="1">Belongs to the UreF family.</text>
</comment>
<sequence length="227" mass="25397">MGQLGALLHLVDPTLPIGGFNHSNGLETFVQQGKVNSRASLEEYVQTQLMQNWIYNDGAYLSLAFDAMANHDLDRLLALDQELAASKIARESREGSYKLGVRLLKIFIRYENHPLLSEFQQAVSEKRCQGYFPIVFAMVAQAMNLDKAETLYAFYYNAAVGVVTNGVKLVPLSQMDGQDILFALRTPLAQAVENSLNPDLDWLGAATLASDIRSMQHEQLYTRLYMS</sequence>